<organism>
    <name type="scientific">Oryza sativa subsp. japonica</name>
    <name type="common">Rice</name>
    <dbReference type="NCBI Taxonomy" id="39947"/>
    <lineage>
        <taxon>Eukaryota</taxon>
        <taxon>Viridiplantae</taxon>
        <taxon>Streptophyta</taxon>
        <taxon>Embryophyta</taxon>
        <taxon>Tracheophyta</taxon>
        <taxon>Spermatophyta</taxon>
        <taxon>Magnoliopsida</taxon>
        <taxon>Liliopsida</taxon>
        <taxon>Poales</taxon>
        <taxon>Poaceae</taxon>
        <taxon>BOP clade</taxon>
        <taxon>Oryzoideae</taxon>
        <taxon>Oryzeae</taxon>
        <taxon>Oryzinae</taxon>
        <taxon>Oryza</taxon>
        <taxon>Oryza sativa</taxon>
    </lineage>
</organism>
<keyword id="KW-1069">Brassinosteroid biosynthesis</keyword>
<keyword id="KW-1003">Cell membrane</keyword>
<keyword id="KW-0349">Heme</keyword>
<keyword id="KW-0408">Iron</keyword>
<keyword id="KW-0444">Lipid biosynthesis</keyword>
<keyword id="KW-0443">Lipid metabolism</keyword>
<keyword id="KW-0472">Membrane</keyword>
<keyword id="KW-0479">Metal-binding</keyword>
<keyword id="KW-0503">Monooxygenase</keyword>
<keyword id="KW-0560">Oxidoreductase</keyword>
<keyword id="KW-1185">Reference proteome</keyword>
<keyword id="KW-0752">Steroid biosynthesis</keyword>
<keyword id="KW-0812">Transmembrane</keyword>
<keyword id="KW-1133">Transmembrane helix</keyword>
<comment type="function">
    <text evidence="6">Catalyzes the C23-alpha-hydroxylation step in brassinosteroid biosynthesis (Probable). Converts 6-deoxocathasterone to 6-deoxoteasterone in the late C6-oxidation pathway and cathasterone to teasterone (TE) in the early C6-oxidation pathway of brassinolide (BL) biosynthesis (Probable).</text>
</comment>
<comment type="cofactor">
    <cofactor evidence="1">
        <name>heme</name>
        <dbReference type="ChEBI" id="CHEBI:30413"/>
    </cofactor>
</comment>
<comment type="pathway">
    <text evidence="5">Plant hormone biosynthesis; brassinosteroid biosynthesis.</text>
</comment>
<comment type="subcellular location">
    <subcellularLocation>
        <location evidence="2">Cell membrane</location>
        <topology evidence="2">Single-pass membrane protein</topology>
    </subcellularLocation>
</comment>
<comment type="tissue specificity">
    <text evidence="3">Highly expressed in shoot apex and inflorenscence. Expressed in roots, stems, leaf blades and leaf sheaths.</text>
</comment>
<comment type="induction">
    <text evidence="3">Down-regulated by brassinolide (BL).</text>
</comment>
<comment type="similarity">
    <text evidence="5">Belongs to the cytochrome P450 family.</text>
</comment>
<proteinExistence type="evidence at transcript level"/>
<protein>
    <recommendedName>
        <fullName evidence="5">Cytochrome P450 90A4</fullName>
        <shortName evidence="5">OsCYP90A4</shortName>
        <ecNumber evidence="6">1.14.99.-</ecNumber>
    </recommendedName>
    <alternativeName>
        <fullName evidence="4">Protein CONSTITUTIVE PHOTOMORPHOGENESIS AND DWARFISM 2</fullName>
        <shortName evidence="4">OsCPD2</shortName>
    </alternativeName>
    <alternativeName>
        <fullName evidence="5">Steroid 23-alpha-hydroxylase</fullName>
    </alternativeName>
</protein>
<name>C90A4_ORYSJ</name>
<sequence length="501" mass="55720">MAAAALLLLAAAAAAVVVAMALRWLLLLGGPAAGRLGKRARMPPGSTGLPLIGETLRLISAYKTPNPEPFIDERVARHGGVFTTHVFGERTVFSADPAFNRLLLAAEGRAVHSSYPSSIATLLGARSLLLTRGAAHKRLHSLTLTRLGRPASPPLLAHIDRLVLATMRQWEPAATVRLMDEAKKITFNLTVKQLVSIEPGPWTESLRREYVKLIDGFFSIPFPLAYFLPFTTYGQALKARKKVAGALREVIKKRMEEKAENGGSIGDDEGKKEKKDMVEELLQAEGGSFSEEEMVDFCLSLLVAGYETTSVLMTLAVKFLTETPAALAELKEEHANIRDMKGKNQPLEWSDYKSMPFTQCVINETLRVGNIISGVFRRANTDIHYKDYTIPKGCKIFASFRAVHLNNEHYENARTFNPWRWQINNKLQNAVGANIFTPFGGGPRLCPGYELARVVVSIFLHHLVTRFSWEETEEDRLVFFPTTRTLKGYPINLRLLSESIC</sequence>
<reference key="1">
    <citation type="journal article" date="2006" name="Nat. Biotechnol.">
        <title>Erect leaves caused by brassinosteroid deficiency increase biomass production and grain yield in rice.</title>
        <authorList>
            <person name="Sakamoto T."/>
            <person name="Morinaka Y."/>
            <person name="Ohnishi T."/>
            <person name="Sunohara H."/>
            <person name="Fujioka S."/>
            <person name="Ueguchi-Tanaka M."/>
            <person name="Mizutani M."/>
            <person name="Sakata K."/>
            <person name="Takatsuto S."/>
            <person name="Yoshida S."/>
            <person name="Tanaka H."/>
            <person name="Kitano H."/>
            <person name="Matsuoka M."/>
        </authorList>
    </citation>
    <scope>NUCLEOTIDE SEQUENCE [MRNA]</scope>
    <source>
        <strain>cv. Nipponbare</strain>
    </source>
</reference>
<reference key="2">
    <citation type="journal article" date="2005" name="BMC Biol.">
        <title>The sequence of rice chromosomes 11 and 12, rich in disease resistance genes and recent gene duplications.</title>
        <authorList>
            <consortium name="The rice chromosomes 11 and 12 sequencing consortia"/>
        </authorList>
    </citation>
    <scope>NUCLEOTIDE SEQUENCE [LARGE SCALE GENOMIC DNA]</scope>
    <source>
        <strain>cv. Nipponbare</strain>
    </source>
</reference>
<reference key="3">
    <citation type="journal article" date="2005" name="Nature">
        <title>The map-based sequence of the rice genome.</title>
        <authorList>
            <consortium name="International rice genome sequencing project (IRGSP)"/>
        </authorList>
    </citation>
    <scope>NUCLEOTIDE SEQUENCE [LARGE SCALE GENOMIC DNA]</scope>
    <source>
        <strain>cv. Nipponbare</strain>
    </source>
</reference>
<reference key="4">
    <citation type="journal article" date="2008" name="Nucleic Acids Res.">
        <title>The rice annotation project database (RAP-DB): 2008 update.</title>
        <authorList>
            <consortium name="The rice annotation project (RAP)"/>
        </authorList>
    </citation>
    <scope>GENOME REANNOTATION</scope>
    <source>
        <strain>cv. Nipponbare</strain>
    </source>
</reference>
<reference key="5">
    <citation type="journal article" date="2013" name="Rice">
        <title>Improvement of the Oryza sativa Nipponbare reference genome using next generation sequence and optical map data.</title>
        <authorList>
            <person name="Kawahara Y."/>
            <person name="de la Bastide M."/>
            <person name="Hamilton J.P."/>
            <person name="Kanamori H."/>
            <person name="McCombie W.R."/>
            <person name="Ouyang S."/>
            <person name="Schwartz D.C."/>
            <person name="Tanaka T."/>
            <person name="Wu J."/>
            <person name="Zhou S."/>
            <person name="Childs K.L."/>
            <person name="Davidson R.M."/>
            <person name="Lin H."/>
            <person name="Quesada-Ocampo L."/>
            <person name="Vaillancourt B."/>
            <person name="Sakai H."/>
            <person name="Lee S.S."/>
            <person name="Kim J."/>
            <person name="Numa H."/>
            <person name="Itoh T."/>
            <person name="Buell C.R."/>
            <person name="Matsumoto T."/>
        </authorList>
    </citation>
    <scope>GENOME REANNOTATION</scope>
    <source>
        <strain>cv. Nipponbare</strain>
    </source>
</reference>
<reference key="6">
    <citation type="journal article" date="2003" name="Science">
        <title>Collection, mapping, and annotation of over 28,000 cDNA clones from japonica rice.</title>
        <authorList>
            <consortium name="The rice full-length cDNA consortium"/>
        </authorList>
    </citation>
    <scope>NUCLEOTIDE SEQUENCE [LARGE SCALE MRNA]</scope>
    <source>
        <strain>cv. Nipponbare</strain>
    </source>
</reference>
<reference key="7">
    <citation type="journal article" date="2006" name="J. Plant Growth Regul.">
        <title>Characterization of CONSTITUTIVE PHOTOMORPHOGENESIS AND DWARFISM homologs in rice (Oryza sativa L.).</title>
        <authorList>
            <person name="Sakamoto T."/>
            <person name="Matsuoka M."/>
        </authorList>
    </citation>
    <scope>FUNCTION</scope>
    <scope>TISSUE SPECIFICITY</scope>
    <scope>INDUCTION</scope>
</reference>
<dbReference type="EC" id="1.14.99.-" evidence="6"/>
<dbReference type="EMBL" id="AB206581">
    <property type="protein sequence ID" value="BAD90974.1"/>
    <property type="molecule type" value="mRNA"/>
</dbReference>
<dbReference type="EMBL" id="DP000011">
    <property type="protein sequence ID" value="ABA95785.1"/>
    <property type="molecule type" value="Genomic_DNA"/>
</dbReference>
<dbReference type="EMBL" id="AP008218">
    <property type="protein sequence ID" value="BAF29136.1"/>
    <property type="molecule type" value="Genomic_DNA"/>
</dbReference>
<dbReference type="EMBL" id="AP014968">
    <property type="protein sequence ID" value="BAT15826.1"/>
    <property type="molecule type" value="Genomic_DNA"/>
</dbReference>
<dbReference type="EMBL" id="AK060257">
    <property type="protein sequence ID" value="BAG87383.1"/>
    <property type="molecule type" value="mRNA"/>
</dbReference>
<dbReference type="RefSeq" id="XP_015619622.1">
    <property type="nucleotide sequence ID" value="XM_015764136.1"/>
</dbReference>
<dbReference type="SMR" id="Q5CCK1"/>
<dbReference type="FunCoup" id="Q5CCK1">
    <property type="interactions" value="240"/>
</dbReference>
<dbReference type="STRING" id="39947.Q5CCK1"/>
<dbReference type="PaxDb" id="39947-Q5CCK1"/>
<dbReference type="EnsemblPlants" id="Os12t0139300-01">
    <property type="protein sequence ID" value="Os12t0139300-01"/>
    <property type="gene ID" value="Os12g0139300"/>
</dbReference>
<dbReference type="Gramene" id="Os12t0139300-01">
    <property type="protein sequence ID" value="Os12t0139300-01"/>
    <property type="gene ID" value="Os12g0139300"/>
</dbReference>
<dbReference type="KEGG" id="dosa:Os12g0139300"/>
<dbReference type="eggNOG" id="KOG0157">
    <property type="taxonomic scope" value="Eukaryota"/>
</dbReference>
<dbReference type="HOGENOM" id="CLU_001570_15_5_1"/>
<dbReference type="InParanoid" id="Q5CCK1"/>
<dbReference type="OMA" id="IEPCEWT"/>
<dbReference type="OrthoDB" id="3945418at2759"/>
<dbReference type="PlantReactome" id="R-OSA-1119456">
    <property type="pathway name" value="Brassinosteroid biosynthesis II"/>
</dbReference>
<dbReference type="UniPathway" id="UPA00381"/>
<dbReference type="Proteomes" id="UP000000763">
    <property type="component" value="Chromosome 12"/>
</dbReference>
<dbReference type="Proteomes" id="UP000059680">
    <property type="component" value="Chromosome 12"/>
</dbReference>
<dbReference type="GO" id="GO:0005886">
    <property type="term" value="C:plasma membrane"/>
    <property type="evidence" value="ECO:0007669"/>
    <property type="project" value="UniProtKB-SubCell"/>
</dbReference>
<dbReference type="GO" id="GO:0080132">
    <property type="term" value="F:fatty acid 2-hydroxylase activity"/>
    <property type="evidence" value="ECO:0000314"/>
    <property type="project" value="UniProtKB"/>
</dbReference>
<dbReference type="GO" id="GO:0020037">
    <property type="term" value="F:heme binding"/>
    <property type="evidence" value="ECO:0007669"/>
    <property type="project" value="InterPro"/>
</dbReference>
<dbReference type="GO" id="GO:0005506">
    <property type="term" value="F:iron ion binding"/>
    <property type="evidence" value="ECO:0007669"/>
    <property type="project" value="InterPro"/>
</dbReference>
<dbReference type="GO" id="GO:0004497">
    <property type="term" value="F:monooxygenase activity"/>
    <property type="evidence" value="ECO:0000318"/>
    <property type="project" value="GO_Central"/>
</dbReference>
<dbReference type="GO" id="GO:0016132">
    <property type="term" value="P:brassinosteroid biosynthetic process"/>
    <property type="evidence" value="ECO:0000314"/>
    <property type="project" value="UniProtKB"/>
</dbReference>
<dbReference type="GO" id="GO:0010268">
    <property type="term" value="P:brassinosteroid homeostasis"/>
    <property type="evidence" value="ECO:0000318"/>
    <property type="project" value="GO_Central"/>
</dbReference>
<dbReference type="CDD" id="cd11043">
    <property type="entry name" value="CYP90-like"/>
    <property type="match status" value="1"/>
</dbReference>
<dbReference type="FunFam" id="1.10.630.10:FF:000046">
    <property type="entry name" value="Cytochrome P450 90A1"/>
    <property type="match status" value="1"/>
</dbReference>
<dbReference type="Gene3D" id="1.10.630.10">
    <property type="entry name" value="Cytochrome P450"/>
    <property type="match status" value="1"/>
</dbReference>
<dbReference type="InterPro" id="IPR001128">
    <property type="entry name" value="Cyt_P450"/>
</dbReference>
<dbReference type="InterPro" id="IPR017972">
    <property type="entry name" value="Cyt_P450_CS"/>
</dbReference>
<dbReference type="InterPro" id="IPR002401">
    <property type="entry name" value="Cyt_P450_E_grp-I"/>
</dbReference>
<dbReference type="InterPro" id="IPR036396">
    <property type="entry name" value="Cyt_P450_sf"/>
</dbReference>
<dbReference type="PANTHER" id="PTHR24286:SF44">
    <property type="entry name" value="3BETA,22ALPHA-DIHYDROXYSTEROID 3-DEHYDROGENASE"/>
    <property type="match status" value="1"/>
</dbReference>
<dbReference type="PANTHER" id="PTHR24286">
    <property type="entry name" value="CYTOCHROME P450 26"/>
    <property type="match status" value="1"/>
</dbReference>
<dbReference type="Pfam" id="PF00067">
    <property type="entry name" value="p450"/>
    <property type="match status" value="1"/>
</dbReference>
<dbReference type="PRINTS" id="PR00463">
    <property type="entry name" value="EP450I"/>
</dbReference>
<dbReference type="PRINTS" id="PR00385">
    <property type="entry name" value="P450"/>
</dbReference>
<dbReference type="SUPFAM" id="SSF48264">
    <property type="entry name" value="Cytochrome P450"/>
    <property type="match status" value="1"/>
</dbReference>
<dbReference type="PROSITE" id="PS00086">
    <property type="entry name" value="CYTOCHROME_P450"/>
    <property type="match status" value="1"/>
</dbReference>
<gene>
    <name evidence="4" type="primary">CYP90A4</name>
    <name evidence="4" type="synonym">CPD2</name>
    <name evidence="8" type="ordered locus">Os12g0139300</name>
    <name evidence="7" type="ordered locus">LOC_Os12g04480</name>
</gene>
<accession>Q5CCK1</accession>
<feature type="chain" id="PRO_0000439013" description="Cytochrome P450 90A4">
    <location>
        <begin position="1"/>
        <end position="501"/>
    </location>
</feature>
<feature type="transmembrane region" description="Helical" evidence="2">
    <location>
        <begin position="2"/>
        <end position="22"/>
    </location>
</feature>
<feature type="binding site" description="axial binding residue" evidence="1">
    <location>
        <position position="446"/>
    </location>
    <ligand>
        <name>heme</name>
        <dbReference type="ChEBI" id="CHEBI:30413"/>
    </ligand>
    <ligandPart>
        <name>Fe</name>
        <dbReference type="ChEBI" id="CHEBI:18248"/>
    </ligandPart>
</feature>
<evidence type="ECO:0000250" key="1">
    <source>
        <dbReference type="UniProtKB" id="P04798"/>
    </source>
</evidence>
<evidence type="ECO:0000255" key="2"/>
<evidence type="ECO:0000269" key="3">
    <source ref="7"/>
</evidence>
<evidence type="ECO:0000303" key="4">
    <source ref="7"/>
</evidence>
<evidence type="ECO:0000305" key="5"/>
<evidence type="ECO:0000305" key="6">
    <source ref="7"/>
</evidence>
<evidence type="ECO:0000312" key="7">
    <source>
        <dbReference type="EMBL" id="ABA95785.1"/>
    </source>
</evidence>
<evidence type="ECO:0000312" key="8">
    <source>
        <dbReference type="EMBL" id="BAF29136.1"/>
    </source>
</evidence>